<proteinExistence type="inferred from homology"/>
<gene>
    <name evidence="1" type="primary">aroE</name>
    <name type="ordered locus">SeHA_C3705</name>
</gene>
<protein>
    <recommendedName>
        <fullName evidence="1">Shikimate dehydrogenase (NADP(+))</fullName>
        <shortName evidence="1">SDH</shortName>
        <ecNumber evidence="1">1.1.1.25</ecNumber>
    </recommendedName>
</protein>
<accession>B4TJX2</accession>
<organism>
    <name type="scientific">Salmonella heidelberg (strain SL476)</name>
    <dbReference type="NCBI Taxonomy" id="454169"/>
    <lineage>
        <taxon>Bacteria</taxon>
        <taxon>Pseudomonadati</taxon>
        <taxon>Pseudomonadota</taxon>
        <taxon>Gammaproteobacteria</taxon>
        <taxon>Enterobacterales</taxon>
        <taxon>Enterobacteriaceae</taxon>
        <taxon>Salmonella</taxon>
    </lineage>
</organism>
<reference key="1">
    <citation type="journal article" date="2011" name="J. Bacteriol.">
        <title>Comparative genomics of 28 Salmonella enterica isolates: evidence for CRISPR-mediated adaptive sublineage evolution.</title>
        <authorList>
            <person name="Fricke W.F."/>
            <person name="Mammel M.K."/>
            <person name="McDermott P.F."/>
            <person name="Tartera C."/>
            <person name="White D.G."/>
            <person name="Leclerc J.E."/>
            <person name="Ravel J."/>
            <person name="Cebula T.A."/>
        </authorList>
    </citation>
    <scope>NUCLEOTIDE SEQUENCE [LARGE SCALE GENOMIC DNA]</scope>
    <source>
        <strain>SL476</strain>
    </source>
</reference>
<feature type="chain" id="PRO_1000100137" description="Shikimate dehydrogenase (NADP(+))">
    <location>
        <begin position="1"/>
        <end position="272"/>
    </location>
</feature>
<feature type="active site" description="Proton acceptor" evidence="1">
    <location>
        <position position="65"/>
    </location>
</feature>
<feature type="binding site" evidence="1">
    <location>
        <begin position="14"/>
        <end position="16"/>
    </location>
    <ligand>
        <name>shikimate</name>
        <dbReference type="ChEBI" id="CHEBI:36208"/>
    </ligand>
</feature>
<feature type="binding site" evidence="1">
    <location>
        <position position="61"/>
    </location>
    <ligand>
        <name>shikimate</name>
        <dbReference type="ChEBI" id="CHEBI:36208"/>
    </ligand>
</feature>
<feature type="binding site" evidence="1">
    <location>
        <position position="77"/>
    </location>
    <ligand>
        <name>NADP(+)</name>
        <dbReference type="ChEBI" id="CHEBI:58349"/>
    </ligand>
</feature>
<feature type="binding site" evidence="1">
    <location>
        <position position="86"/>
    </location>
    <ligand>
        <name>shikimate</name>
        <dbReference type="ChEBI" id="CHEBI:36208"/>
    </ligand>
</feature>
<feature type="binding site" evidence="1">
    <location>
        <position position="102"/>
    </location>
    <ligand>
        <name>shikimate</name>
        <dbReference type="ChEBI" id="CHEBI:36208"/>
    </ligand>
</feature>
<feature type="binding site" evidence="1">
    <location>
        <begin position="126"/>
        <end position="130"/>
    </location>
    <ligand>
        <name>NADP(+)</name>
        <dbReference type="ChEBI" id="CHEBI:58349"/>
    </ligand>
</feature>
<feature type="binding site" evidence="1">
    <location>
        <begin position="149"/>
        <end position="154"/>
    </location>
    <ligand>
        <name>NADP(+)</name>
        <dbReference type="ChEBI" id="CHEBI:58349"/>
    </ligand>
</feature>
<feature type="binding site" evidence="1">
    <location>
        <position position="213"/>
    </location>
    <ligand>
        <name>NADP(+)</name>
        <dbReference type="ChEBI" id="CHEBI:58349"/>
    </ligand>
</feature>
<feature type="binding site" evidence="1">
    <location>
        <position position="215"/>
    </location>
    <ligand>
        <name>shikimate</name>
        <dbReference type="ChEBI" id="CHEBI:36208"/>
    </ligand>
</feature>
<feature type="binding site" evidence="1">
    <location>
        <position position="237"/>
    </location>
    <ligand>
        <name>NADP(+)</name>
        <dbReference type="ChEBI" id="CHEBI:58349"/>
    </ligand>
</feature>
<evidence type="ECO:0000255" key="1">
    <source>
        <dbReference type="HAMAP-Rule" id="MF_00222"/>
    </source>
</evidence>
<comment type="function">
    <text evidence="1">Involved in the biosynthesis of the chorismate, which leads to the biosynthesis of aromatic amino acids. Catalyzes the reversible NADPH linked reduction of 3-dehydroshikimate (DHSA) to yield shikimate (SA).</text>
</comment>
<comment type="catalytic activity">
    <reaction evidence="1">
        <text>shikimate + NADP(+) = 3-dehydroshikimate + NADPH + H(+)</text>
        <dbReference type="Rhea" id="RHEA:17737"/>
        <dbReference type="ChEBI" id="CHEBI:15378"/>
        <dbReference type="ChEBI" id="CHEBI:16630"/>
        <dbReference type="ChEBI" id="CHEBI:36208"/>
        <dbReference type="ChEBI" id="CHEBI:57783"/>
        <dbReference type="ChEBI" id="CHEBI:58349"/>
        <dbReference type="EC" id="1.1.1.25"/>
    </reaction>
</comment>
<comment type="pathway">
    <text evidence="1">Metabolic intermediate biosynthesis; chorismate biosynthesis; chorismate from D-erythrose 4-phosphate and phosphoenolpyruvate: step 4/7.</text>
</comment>
<comment type="subunit">
    <text evidence="1">Homodimer.</text>
</comment>
<comment type="similarity">
    <text evidence="1">Belongs to the shikimate dehydrogenase family.</text>
</comment>
<dbReference type="EC" id="1.1.1.25" evidence="1"/>
<dbReference type="EMBL" id="CP001120">
    <property type="protein sequence ID" value="ACF67668.1"/>
    <property type="molecule type" value="Genomic_DNA"/>
</dbReference>
<dbReference type="RefSeq" id="WP_000451199.1">
    <property type="nucleotide sequence ID" value="NC_011083.1"/>
</dbReference>
<dbReference type="SMR" id="B4TJX2"/>
<dbReference type="KEGG" id="seh:SeHA_C3705"/>
<dbReference type="HOGENOM" id="CLU_044063_2_1_6"/>
<dbReference type="UniPathway" id="UPA00053">
    <property type="reaction ID" value="UER00087"/>
</dbReference>
<dbReference type="Proteomes" id="UP000001866">
    <property type="component" value="Chromosome"/>
</dbReference>
<dbReference type="GO" id="GO:0005829">
    <property type="term" value="C:cytosol"/>
    <property type="evidence" value="ECO:0007669"/>
    <property type="project" value="TreeGrafter"/>
</dbReference>
<dbReference type="GO" id="GO:0050661">
    <property type="term" value="F:NADP binding"/>
    <property type="evidence" value="ECO:0007669"/>
    <property type="project" value="InterPro"/>
</dbReference>
<dbReference type="GO" id="GO:0004764">
    <property type="term" value="F:shikimate 3-dehydrogenase (NADP+) activity"/>
    <property type="evidence" value="ECO:0007669"/>
    <property type="project" value="UniProtKB-UniRule"/>
</dbReference>
<dbReference type="GO" id="GO:0008652">
    <property type="term" value="P:amino acid biosynthetic process"/>
    <property type="evidence" value="ECO:0007669"/>
    <property type="project" value="UniProtKB-KW"/>
</dbReference>
<dbReference type="GO" id="GO:0009073">
    <property type="term" value="P:aromatic amino acid family biosynthetic process"/>
    <property type="evidence" value="ECO:0007669"/>
    <property type="project" value="UniProtKB-KW"/>
</dbReference>
<dbReference type="GO" id="GO:0009423">
    <property type="term" value="P:chorismate biosynthetic process"/>
    <property type="evidence" value="ECO:0007669"/>
    <property type="project" value="UniProtKB-UniRule"/>
</dbReference>
<dbReference type="GO" id="GO:0019632">
    <property type="term" value="P:shikimate metabolic process"/>
    <property type="evidence" value="ECO:0007669"/>
    <property type="project" value="InterPro"/>
</dbReference>
<dbReference type="CDD" id="cd01065">
    <property type="entry name" value="NAD_bind_Shikimate_DH"/>
    <property type="match status" value="1"/>
</dbReference>
<dbReference type="FunFam" id="3.40.50.10860:FF:000006">
    <property type="entry name" value="Shikimate dehydrogenase (NADP(+))"/>
    <property type="match status" value="1"/>
</dbReference>
<dbReference type="FunFam" id="3.40.50.720:FF:000104">
    <property type="entry name" value="Shikimate dehydrogenase (NADP(+))"/>
    <property type="match status" value="1"/>
</dbReference>
<dbReference type="Gene3D" id="3.40.50.10860">
    <property type="entry name" value="Leucine Dehydrogenase, chain A, domain 1"/>
    <property type="match status" value="1"/>
</dbReference>
<dbReference type="Gene3D" id="3.40.50.720">
    <property type="entry name" value="NAD(P)-binding Rossmann-like Domain"/>
    <property type="match status" value="1"/>
</dbReference>
<dbReference type="HAMAP" id="MF_00222">
    <property type="entry name" value="Shikimate_DH_AroE"/>
    <property type="match status" value="1"/>
</dbReference>
<dbReference type="InterPro" id="IPR046346">
    <property type="entry name" value="Aminoacid_DH-like_N_sf"/>
</dbReference>
<dbReference type="InterPro" id="IPR036291">
    <property type="entry name" value="NAD(P)-bd_dom_sf"/>
</dbReference>
<dbReference type="InterPro" id="IPR041121">
    <property type="entry name" value="SDH_C"/>
</dbReference>
<dbReference type="InterPro" id="IPR011342">
    <property type="entry name" value="Shikimate_DH"/>
</dbReference>
<dbReference type="InterPro" id="IPR013708">
    <property type="entry name" value="Shikimate_DH-bd_N"/>
</dbReference>
<dbReference type="InterPro" id="IPR022893">
    <property type="entry name" value="Shikimate_DH_fam"/>
</dbReference>
<dbReference type="InterPro" id="IPR006151">
    <property type="entry name" value="Shikm_DH/Glu-tRNA_Rdtase"/>
</dbReference>
<dbReference type="NCBIfam" id="TIGR00507">
    <property type="entry name" value="aroE"/>
    <property type="match status" value="1"/>
</dbReference>
<dbReference type="NCBIfam" id="NF001310">
    <property type="entry name" value="PRK00258.1-2"/>
    <property type="match status" value="1"/>
</dbReference>
<dbReference type="PANTHER" id="PTHR21089:SF1">
    <property type="entry name" value="BIFUNCTIONAL 3-DEHYDROQUINATE DEHYDRATASE_SHIKIMATE DEHYDROGENASE, CHLOROPLASTIC"/>
    <property type="match status" value="1"/>
</dbReference>
<dbReference type="PANTHER" id="PTHR21089">
    <property type="entry name" value="SHIKIMATE DEHYDROGENASE"/>
    <property type="match status" value="1"/>
</dbReference>
<dbReference type="Pfam" id="PF18317">
    <property type="entry name" value="SDH_C"/>
    <property type="match status" value="1"/>
</dbReference>
<dbReference type="Pfam" id="PF01488">
    <property type="entry name" value="Shikimate_DH"/>
    <property type="match status" value="1"/>
</dbReference>
<dbReference type="Pfam" id="PF08501">
    <property type="entry name" value="Shikimate_dh_N"/>
    <property type="match status" value="1"/>
</dbReference>
<dbReference type="SUPFAM" id="SSF53223">
    <property type="entry name" value="Aminoacid dehydrogenase-like, N-terminal domain"/>
    <property type="match status" value="1"/>
</dbReference>
<dbReference type="SUPFAM" id="SSF51735">
    <property type="entry name" value="NAD(P)-binding Rossmann-fold domains"/>
    <property type="match status" value="1"/>
</dbReference>
<keyword id="KW-0028">Amino-acid biosynthesis</keyword>
<keyword id="KW-0057">Aromatic amino acid biosynthesis</keyword>
<keyword id="KW-0521">NADP</keyword>
<keyword id="KW-0560">Oxidoreductase</keyword>
<sequence>METYAVFGNPIAHSKSPFIHQQFAQQLDIVHPYGRVLAPINNFINTLDAFFAAGGKGANITVPFKEEAFARSDELTERASLAGAVNTLKRLEDGRLLGDNTDGIGLLSDLKRLNFIRPGLRILLIGAGGASRGVLLPLLSLDCAVTITNRTASRAEALAKIFAHTGSVHATDMDKLDGCEFDLIINATSSGIRGEIPAIPASLIHPSLCCYDMFYQKGNTPFLSWCVQQGAKRYADGLGMLVGQAAHAVLLWHGVLPQVEPVIELLQQELLA</sequence>
<name>AROE_SALHS</name>